<organism>
    <name type="scientific">Homo sapiens</name>
    <name type="common">Human</name>
    <dbReference type="NCBI Taxonomy" id="9606"/>
    <lineage>
        <taxon>Eukaryota</taxon>
        <taxon>Metazoa</taxon>
        <taxon>Chordata</taxon>
        <taxon>Craniata</taxon>
        <taxon>Vertebrata</taxon>
        <taxon>Euteleostomi</taxon>
        <taxon>Mammalia</taxon>
        <taxon>Eutheria</taxon>
        <taxon>Euarchontoglires</taxon>
        <taxon>Primates</taxon>
        <taxon>Haplorrhini</taxon>
        <taxon>Catarrhini</taxon>
        <taxon>Hominidae</taxon>
        <taxon>Homo</taxon>
    </lineage>
</organism>
<proteinExistence type="inferred from homology"/>
<evidence type="ECO:0000250" key="1">
    <source>
        <dbReference type="UniProtKB" id="Q8IVG9"/>
    </source>
</evidence>
<evidence type="ECO:0000303" key="2">
    <source>
    </source>
</evidence>
<evidence type="ECO:0000305" key="3"/>
<evidence type="ECO:0000305" key="4">
    <source>
    </source>
</evidence>
<evidence type="ECO:0000312" key="5">
    <source>
        <dbReference type="HGNC" id="HGNC:37169"/>
    </source>
</evidence>
<reference key="1">
    <citation type="journal article" date="2006" name="Nature">
        <title>The DNA sequence, annotation and analysis of human chromosome 3.</title>
        <authorList>
            <person name="Muzny D.M."/>
            <person name="Scherer S.E."/>
            <person name="Kaul R."/>
            <person name="Wang J."/>
            <person name="Yu J."/>
            <person name="Sudbrak R."/>
            <person name="Buhay C.J."/>
            <person name="Chen R."/>
            <person name="Cree A."/>
            <person name="Ding Y."/>
            <person name="Dugan-Rocha S."/>
            <person name="Gill R."/>
            <person name="Gunaratne P."/>
            <person name="Harris R.A."/>
            <person name="Hawes A.C."/>
            <person name="Hernandez J."/>
            <person name="Hodgson A.V."/>
            <person name="Hume J."/>
            <person name="Jackson A."/>
            <person name="Khan Z.M."/>
            <person name="Kovar-Smith C."/>
            <person name="Lewis L.R."/>
            <person name="Lozado R.J."/>
            <person name="Metzker M.L."/>
            <person name="Milosavljevic A."/>
            <person name="Miner G.R."/>
            <person name="Morgan M.B."/>
            <person name="Nazareth L.V."/>
            <person name="Scott G."/>
            <person name="Sodergren E."/>
            <person name="Song X.-Z."/>
            <person name="Steffen D."/>
            <person name="Wei S."/>
            <person name="Wheeler D.A."/>
            <person name="Wright M.W."/>
            <person name="Worley K.C."/>
            <person name="Yuan Y."/>
            <person name="Zhang Z."/>
            <person name="Adams C.Q."/>
            <person name="Ansari-Lari M.A."/>
            <person name="Ayele M."/>
            <person name="Brown M.J."/>
            <person name="Chen G."/>
            <person name="Chen Z."/>
            <person name="Clendenning J."/>
            <person name="Clerc-Blankenburg K.P."/>
            <person name="Chen R."/>
            <person name="Chen Z."/>
            <person name="Davis C."/>
            <person name="Delgado O."/>
            <person name="Dinh H.H."/>
            <person name="Dong W."/>
            <person name="Draper H."/>
            <person name="Ernst S."/>
            <person name="Fu G."/>
            <person name="Gonzalez-Garay M.L."/>
            <person name="Garcia D.K."/>
            <person name="Gillett W."/>
            <person name="Gu J."/>
            <person name="Hao B."/>
            <person name="Haugen E."/>
            <person name="Havlak P."/>
            <person name="He X."/>
            <person name="Hennig S."/>
            <person name="Hu S."/>
            <person name="Huang W."/>
            <person name="Jackson L.R."/>
            <person name="Jacob L.S."/>
            <person name="Kelly S.H."/>
            <person name="Kube M."/>
            <person name="Levy R."/>
            <person name="Li Z."/>
            <person name="Liu B."/>
            <person name="Liu J."/>
            <person name="Liu W."/>
            <person name="Lu J."/>
            <person name="Maheshwari M."/>
            <person name="Nguyen B.-V."/>
            <person name="Okwuonu G.O."/>
            <person name="Palmeiri A."/>
            <person name="Pasternak S."/>
            <person name="Perez L.M."/>
            <person name="Phelps K.A."/>
            <person name="Plopper F.J."/>
            <person name="Qiang B."/>
            <person name="Raymond C."/>
            <person name="Rodriguez R."/>
            <person name="Saenphimmachak C."/>
            <person name="Santibanez J."/>
            <person name="Shen H."/>
            <person name="Shen Y."/>
            <person name="Subramanian S."/>
            <person name="Tabor P.E."/>
            <person name="Verduzco D."/>
            <person name="Waldron L."/>
            <person name="Wang J."/>
            <person name="Wang J."/>
            <person name="Wang Q."/>
            <person name="Williams G.A."/>
            <person name="Wong G.K.-S."/>
            <person name="Yao Z."/>
            <person name="Zhang J."/>
            <person name="Zhang X."/>
            <person name="Zhao G."/>
            <person name="Zhou J."/>
            <person name="Zhou Y."/>
            <person name="Nelson D."/>
            <person name="Lehrach H."/>
            <person name="Reinhardt R."/>
            <person name="Naylor S.L."/>
            <person name="Yang H."/>
            <person name="Olson M."/>
            <person name="Weinstock G."/>
            <person name="Gibbs R.A."/>
        </authorList>
    </citation>
    <scope>NUCLEOTIDE SEQUENCE [LARGE SCALE GENOMIC DNA]</scope>
</reference>
<reference key="2">
    <citation type="journal article" date="2009" name="Genomics">
        <title>Evidence for potential functionality of nuclearly-encoded humanin isoforms.</title>
        <authorList>
            <person name="Bodzioch M."/>
            <person name="Lapicka-Bodzioch K."/>
            <person name="Zapala B."/>
            <person name="Kamysz W."/>
            <person name="Kiec-Wilk B."/>
            <person name="Dembinska-Kiec A."/>
        </authorList>
    </citation>
    <scope>IDENTIFICATION</scope>
</reference>
<sequence length="24" mass="2661">MAPRGFSCLLLSTSEIDLPVKRRA</sequence>
<protein>
    <recommendedName>
        <fullName evidence="3">Humanin-like 12</fullName>
        <shortName evidence="2">HN12</shortName>
    </recommendedName>
    <alternativeName>
        <fullName evidence="5">MT-RNR2-like protein 12</fullName>
    </alternativeName>
</protein>
<feature type="chain" id="PRO_0000430277" description="Humanin-like 12">
    <location>
        <begin position="1"/>
        <end position="24"/>
    </location>
</feature>
<accession>P0DMP1</accession>
<dbReference type="EMBL" id="AC117444">
    <property type="status" value="NOT_ANNOTATED_CDS"/>
    <property type="molecule type" value="Genomic_DNA"/>
</dbReference>
<dbReference type="RefSeq" id="NP_001177631.1">
    <property type="nucleotide sequence ID" value="NM_001190702.1"/>
</dbReference>
<dbReference type="BioMuta" id="MTRNR2L12"/>
<dbReference type="UCSC" id="uc062lty.1">
    <property type="organism name" value="human"/>
</dbReference>
<dbReference type="AGR" id="HGNC:37169"/>
<dbReference type="DisGeNET" id="100463486"/>
<dbReference type="GeneCards" id="MTRNR2L12"/>
<dbReference type="HGNC" id="HGNC:37169">
    <property type="gene designation" value="MTRNR2L12"/>
</dbReference>
<dbReference type="neXtProt" id="NX_P0DMP1"/>
<dbReference type="VEuPathDB" id="HostDB:ENSG00000269028"/>
<dbReference type="HOGENOM" id="CLU_221584_0_0_1"/>
<dbReference type="InParanoid" id="P0DMP1"/>
<dbReference type="PAN-GO" id="P0DMP1">
    <property type="GO annotations" value="2 GO annotations based on evolutionary models"/>
</dbReference>
<dbReference type="ChiTaRS" id="MTRNR2L12">
    <property type="organism name" value="human"/>
</dbReference>
<dbReference type="Pharos" id="P0DMP1">
    <property type="development level" value="Tdark"/>
</dbReference>
<dbReference type="PRO" id="PR:P0DMP1"/>
<dbReference type="Proteomes" id="UP000005640">
    <property type="component" value="Chromosome 3"/>
</dbReference>
<dbReference type="Bgee" id="ENSG00000269028">
    <property type="expression patterns" value="Expressed in sural nerve and 98 other cell types or tissues"/>
</dbReference>
<dbReference type="GO" id="GO:0005737">
    <property type="term" value="C:cytoplasm"/>
    <property type="evidence" value="ECO:0007669"/>
    <property type="project" value="UniProtKB-SubCell"/>
</dbReference>
<dbReference type="GO" id="GO:0005576">
    <property type="term" value="C:extracellular region"/>
    <property type="evidence" value="ECO:0007669"/>
    <property type="project" value="UniProtKB-SubCell"/>
</dbReference>
<dbReference type="CDD" id="cd20245">
    <property type="entry name" value="humanin"/>
    <property type="match status" value="1"/>
</dbReference>
<dbReference type="InterPro" id="IPR028139">
    <property type="entry name" value="Humanin"/>
</dbReference>
<dbReference type="PANTHER" id="PTHR33895">
    <property type="entry name" value="HUMANIN-LIKE 4"/>
    <property type="match status" value="1"/>
</dbReference>
<dbReference type="PANTHER" id="PTHR33895:SF5">
    <property type="entry name" value="HUMANIN-LIKE 4"/>
    <property type="match status" value="1"/>
</dbReference>
<dbReference type="Pfam" id="PF15040">
    <property type="entry name" value="Humanin"/>
    <property type="match status" value="1"/>
</dbReference>
<comment type="function">
    <text evidence="1">Plays a role as a neuroprotective and antiapoptotic factor.</text>
</comment>
<comment type="subcellular location">
    <subcellularLocation>
        <location evidence="1">Secreted</location>
    </subcellularLocation>
    <subcellularLocation>
        <location evidence="1">Cytoplasm</location>
    </subcellularLocation>
</comment>
<comment type="similarity">
    <text evidence="3">Belongs to the humanin family.</text>
</comment>
<comment type="caution">
    <text evidence="4">The humanin peptide has been shown to be biologically active but is the product of a mitochondrial gene, MT-RNR2. The mechanisms allowing the production and the secretion of humanin from the mitochondrial gene remaining unclear, the possibility exist that the physiologically active humanin peptide is encoded by one of the related genes present in the nuclear genome including the one described here (PubMed:19477263).</text>
</comment>
<keyword id="KW-0963">Cytoplasm</keyword>
<keyword id="KW-1185">Reference proteome</keyword>
<keyword id="KW-0964">Secreted</keyword>
<gene>
    <name evidence="5" type="primary">MTRNR2L12</name>
</gene>
<name>HMN12_HUMAN</name>